<protein>
    <recommendedName>
        <fullName>Pleckstrin homology domain-containing family O member 1</fullName>
        <shortName>PH domain-containing family O member 1</shortName>
    </recommendedName>
</protein>
<evidence type="ECO:0000250" key="1"/>
<evidence type="ECO:0000250" key="2">
    <source>
        <dbReference type="UniProtKB" id="Q53GL0"/>
    </source>
</evidence>
<evidence type="ECO:0000250" key="3">
    <source>
        <dbReference type="UniProtKB" id="Q5BJM5"/>
    </source>
</evidence>
<evidence type="ECO:0000255" key="4"/>
<evidence type="ECO:0000255" key="5">
    <source>
        <dbReference type="PROSITE-ProRule" id="PRU00145"/>
    </source>
</evidence>
<evidence type="ECO:0000256" key="6">
    <source>
        <dbReference type="SAM" id="MobiDB-lite"/>
    </source>
</evidence>
<evidence type="ECO:0000269" key="7">
    <source>
    </source>
</evidence>
<evidence type="ECO:0000305" key="8"/>
<evidence type="ECO:0007744" key="9">
    <source>
    </source>
</evidence>
<organism>
    <name type="scientific">Mus musculus</name>
    <name type="common">Mouse</name>
    <dbReference type="NCBI Taxonomy" id="10090"/>
    <lineage>
        <taxon>Eukaryota</taxon>
        <taxon>Metazoa</taxon>
        <taxon>Chordata</taxon>
        <taxon>Craniata</taxon>
        <taxon>Vertebrata</taxon>
        <taxon>Euteleostomi</taxon>
        <taxon>Mammalia</taxon>
        <taxon>Eutheria</taxon>
        <taxon>Euarchontoglires</taxon>
        <taxon>Glires</taxon>
        <taxon>Rodentia</taxon>
        <taxon>Myomorpha</taxon>
        <taxon>Muroidea</taxon>
        <taxon>Muridae</taxon>
        <taxon>Murinae</taxon>
        <taxon>Mus</taxon>
        <taxon>Mus</taxon>
    </lineage>
</organism>
<sequence length="408" mass="45997">MKKSGSGKRGPPDGNHQSAAPEKVGWVRKFCGKGIFREIWKNRYVVLKGDQLYVSEKEVKDEKNSQEVFDLSDYEKCEELRKSKSRSKKNHSKFTLARCRQPGTTAPNLIFLAVSPEEKESWINALSSAITRAKNRILDEVTVEEDSYLAHPTRDRAKIQHSRRPPTRGHLMAVASTSTSDGMLTLDLIQEEDPSPEEPASCAESFRVDLDKSVAQLAGSRRRADSDRIQPSSQRASSLSRPWEKPDKGAPYTPQALKKFPSTEKSRCASLEEILSQRDTAPARPLHLQAEESLPPVPAQPGQLSRIQDLVARKLEKTQELLAEVQGLGDGKRKAKDPPQSPPDSESEQLLLETERLLGEASSNWSQAKRVLQEVRELRDLYRQMDLQTPDSHLRQTSQHSQYRKSLM</sequence>
<name>PKHO1_MOUSE</name>
<proteinExistence type="evidence at protein level"/>
<reference key="1">
    <citation type="submission" date="1999-07" db="EMBL/GenBank/DDBJ databases">
        <title>Identification of a protein that associates with TNF intracellular domain.</title>
        <authorList>
            <person name="Kohchi C."/>
            <person name="Shige K."/>
        </authorList>
    </citation>
    <scope>NUCLEOTIDE SEQUENCE [MRNA]</scope>
</reference>
<reference key="2">
    <citation type="journal article" date="2005" name="Science">
        <title>The transcriptional landscape of the mammalian genome.</title>
        <authorList>
            <person name="Carninci P."/>
            <person name="Kasukawa T."/>
            <person name="Katayama S."/>
            <person name="Gough J."/>
            <person name="Frith M.C."/>
            <person name="Maeda N."/>
            <person name="Oyama R."/>
            <person name="Ravasi T."/>
            <person name="Lenhard B."/>
            <person name="Wells C."/>
            <person name="Kodzius R."/>
            <person name="Shimokawa K."/>
            <person name="Bajic V.B."/>
            <person name="Brenner S.E."/>
            <person name="Batalov S."/>
            <person name="Forrest A.R."/>
            <person name="Zavolan M."/>
            <person name="Davis M.J."/>
            <person name="Wilming L.G."/>
            <person name="Aidinis V."/>
            <person name="Allen J.E."/>
            <person name="Ambesi-Impiombato A."/>
            <person name="Apweiler R."/>
            <person name="Aturaliya R.N."/>
            <person name="Bailey T.L."/>
            <person name="Bansal M."/>
            <person name="Baxter L."/>
            <person name="Beisel K.W."/>
            <person name="Bersano T."/>
            <person name="Bono H."/>
            <person name="Chalk A.M."/>
            <person name="Chiu K.P."/>
            <person name="Choudhary V."/>
            <person name="Christoffels A."/>
            <person name="Clutterbuck D.R."/>
            <person name="Crowe M.L."/>
            <person name="Dalla E."/>
            <person name="Dalrymple B.P."/>
            <person name="de Bono B."/>
            <person name="Della Gatta G."/>
            <person name="di Bernardo D."/>
            <person name="Down T."/>
            <person name="Engstrom P."/>
            <person name="Fagiolini M."/>
            <person name="Faulkner G."/>
            <person name="Fletcher C.F."/>
            <person name="Fukushima T."/>
            <person name="Furuno M."/>
            <person name="Futaki S."/>
            <person name="Gariboldi M."/>
            <person name="Georgii-Hemming P."/>
            <person name="Gingeras T.R."/>
            <person name="Gojobori T."/>
            <person name="Green R.E."/>
            <person name="Gustincich S."/>
            <person name="Harbers M."/>
            <person name="Hayashi Y."/>
            <person name="Hensch T.K."/>
            <person name="Hirokawa N."/>
            <person name="Hill D."/>
            <person name="Huminiecki L."/>
            <person name="Iacono M."/>
            <person name="Ikeo K."/>
            <person name="Iwama A."/>
            <person name="Ishikawa T."/>
            <person name="Jakt M."/>
            <person name="Kanapin A."/>
            <person name="Katoh M."/>
            <person name="Kawasawa Y."/>
            <person name="Kelso J."/>
            <person name="Kitamura H."/>
            <person name="Kitano H."/>
            <person name="Kollias G."/>
            <person name="Krishnan S.P."/>
            <person name="Kruger A."/>
            <person name="Kummerfeld S.K."/>
            <person name="Kurochkin I.V."/>
            <person name="Lareau L.F."/>
            <person name="Lazarevic D."/>
            <person name="Lipovich L."/>
            <person name="Liu J."/>
            <person name="Liuni S."/>
            <person name="McWilliam S."/>
            <person name="Madan Babu M."/>
            <person name="Madera M."/>
            <person name="Marchionni L."/>
            <person name="Matsuda H."/>
            <person name="Matsuzawa S."/>
            <person name="Miki H."/>
            <person name="Mignone F."/>
            <person name="Miyake S."/>
            <person name="Morris K."/>
            <person name="Mottagui-Tabar S."/>
            <person name="Mulder N."/>
            <person name="Nakano N."/>
            <person name="Nakauchi H."/>
            <person name="Ng P."/>
            <person name="Nilsson R."/>
            <person name="Nishiguchi S."/>
            <person name="Nishikawa S."/>
            <person name="Nori F."/>
            <person name="Ohara O."/>
            <person name="Okazaki Y."/>
            <person name="Orlando V."/>
            <person name="Pang K.C."/>
            <person name="Pavan W.J."/>
            <person name="Pavesi G."/>
            <person name="Pesole G."/>
            <person name="Petrovsky N."/>
            <person name="Piazza S."/>
            <person name="Reed J."/>
            <person name="Reid J.F."/>
            <person name="Ring B.Z."/>
            <person name="Ringwald M."/>
            <person name="Rost B."/>
            <person name="Ruan Y."/>
            <person name="Salzberg S.L."/>
            <person name="Sandelin A."/>
            <person name="Schneider C."/>
            <person name="Schoenbach C."/>
            <person name="Sekiguchi K."/>
            <person name="Semple C.A."/>
            <person name="Seno S."/>
            <person name="Sessa L."/>
            <person name="Sheng Y."/>
            <person name="Shibata Y."/>
            <person name="Shimada H."/>
            <person name="Shimada K."/>
            <person name="Silva D."/>
            <person name="Sinclair B."/>
            <person name="Sperling S."/>
            <person name="Stupka E."/>
            <person name="Sugiura K."/>
            <person name="Sultana R."/>
            <person name="Takenaka Y."/>
            <person name="Taki K."/>
            <person name="Tammoja K."/>
            <person name="Tan S.L."/>
            <person name="Tang S."/>
            <person name="Taylor M.S."/>
            <person name="Tegner J."/>
            <person name="Teichmann S.A."/>
            <person name="Ueda H.R."/>
            <person name="van Nimwegen E."/>
            <person name="Verardo R."/>
            <person name="Wei C.L."/>
            <person name="Yagi K."/>
            <person name="Yamanishi H."/>
            <person name="Zabarovsky E."/>
            <person name="Zhu S."/>
            <person name="Zimmer A."/>
            <person name="Hide W."/>
            <person name="Bult C."/>
            <person name="Grimmond S.M."/>
            <person name="Teasdale R.D."/>
            <person name="Liu E.T."/>
            <person name="Brusic V."/>
            <person name="Quackenbush J."/>
            <person name="Wahlestedt C."/>
            <person name="Mattick J.S."/>
            <person name="Hume D.A."/>
            <person name="Kai C."/>
            <person name="Sasaki D."/>
            <person name="Tomaru Y."/>
            <person name="Fukuda S."/>
            <person name="Kanamori-Katayama M."/>
            <person name="Suzuki M."/>
            <person name="Aoki J."/>
            <person name="Arakawa T."/>
            <person name="Iida J."/>
            <person name="Imamura K."/>
            <person name="Itoh M."/>
            <person name="Kato T."/>
            <person name="Kawaji H."/>
            <person name="Kawagashira N."/>
            <person name="Kawashima T."/>
            <person name="Kojima M."/>
            <person name="Kondo S."/>
            <person name="Konno H."/>
            <person name="Nakano K."/>
            <person name="Ninomiya N."/>
            <person name="Nishio T."/>
            <person name="Okada M."/>
            <person name="Plessy C."/>
            <person name="Shibata K."/>
            <person name="Shiraki T."/>
            <person name="Suzuki S."/>
            <person name="Tagami M."/>
            <person name="Waki K."/>
            <person name="Watahiki A."/>
            <person name="Okamura-Oho Y."/>
            <person name="Suzuki H."/>
            <person name="Kawai J."/>
            <person name="Hayashizaki Y."/>
        </authorList>
    </citation>
    <scope>NUCLEOTIDE SEQUENCE [LARGE SCALE MRNA]</scope>
    <source>
        <strain>C57BL/6J</strain>
        <strain>NOD</strain>
        <tissue>Head</tissue>
    </source>
</reference>
<reference key="3">
    <citation type="journal article" date="2004" name="Genome Res.">
        <title>The status, quality, and expansion of the NIH full-length cDNA project: the Mammalian Gene Collection (MGC).</title>
        <authorList>
            <consortium name="The MGC Project Team"/>
        </authorList>
    </citation>
    <scope>NUCLEOTIDE SEQUENCE [LARGE SCALE MRNA]</scope>
    <source>
        <tissue>Brain</tissue>
    </source>
</reference>
<reference key="4">
    <citation type="journal article" date="2007" name="Cancer Res.">
        <title>Casein kinase 2-interacting protein-1, a novel Akt pleckstrin homology domain-interacting protein, down-regulates PI3K/Akt signaling and suppresses tumor growth in vivo.</title>
        <authorList>
            <person name="Tokuda E."/>
            <person name="Fujita N."/>
            <person name="Oh-hara T."/>
            <person name="Sato S."/>
            <person name="Kurata A."/>
            <person name="Katayama R."/>
            <person name="Itoh T."/>
            <person name="Takenawa T."/>
            <person name="Miyazono K."/>
            <person name="Tsuruo T."/>
        </authorList>
    </citation>
    <scope>FUNCTION</scope>
</reference>
<reference key="5">
    <citation type="journal article" date="2009" name="Immunity">
        <title>The phagosomal proteome in interferon-gamma-activated macrophages.</title>
        <authorList>
            <person name="Trost M."/>
            <person name="English L."/>
            <person name="Lemieux S."/>
            <person name="Courcelles M."/>
            <person name="Desjardins M."/>
            <person name="Thibault P."/>
        </authorList>
    </citation>
    <scope>PHOSPHORYLATION [LARGE SCALE ANALYSIS] AT SER-226 AND SER-270</scope>
    <scope>IDENTIFICATION BY MASS SPECTROMETRY [LARGE SCALE ANALYSIS]</scope>
</reference>
<dbReference type="EMBL" id="AF168675">
    <property type="protein sequence ID" value="AAF89643.1"/>
    <property type="molecule type" value="mRNA"/>
</dbReference>
<dbReference type="EMBL" id="AK014374">
    <property type="protein sequence ID" value="BAB29306.1"/>
    <property type="molecule type" value="mRNA"/>
</dbReference>
<dbReference type="EMBL" id="AK170025">
    <property type="protein sequence ID" value="BAE41517.1"/>
    <property type="molecule type" value="mRNA"/>
</dbReference>
<dbReference type="EMBL" id="AK170922">
    <property type="protein sequence ID" value="BAE42115.1"/>
    <property type="molecule type" value="mRNA"/>
</dbReference>
<dbReference type="EMBL" id="BC117003">
    <property type="protein sequence ID" value="AAI17004.1"/>
    <property type="molecule type" value="mRNA"/>
</dbReference>
<dbReference type="EMBL" id="BC125441">
    <property type="protein sequence ID" value="AAI25442.1"/>
    <property type="molecule type" value="mRNA"/>
</dbReference>
<dbReference type="CCDS" id="CCDS17627.1"/>
<dbReference type="RefSeq" id="NP_075809.1">
    <property type="nucleotide sequence ID" value="NM_023320.3"/>
</dbReference>
<dbReference type="SMR" id="Q9JIY0"/>
<dbReference type="BioGRID" id="212026">
    <property type="interactions" value="7"/>
</dbReference>
<dbReference type="FunCoup" id="Q9JIY0">
    <property type="interactions" value="148"/>
</dbReference>
<dbReference type="STRING" id="10090.ENSMUSP00000015889"/>
<dbReference type="iPTMnet" id="Q9JIY0"/>
<dbReference type="PhosphoSitePlus" id="Q9JIY0"/>
<dbReference type="jPOST" id="Q9JIY0"/>
<dbReference type="PaxDb" id="10090-ENSMUSP00000015889"/>
<dbReference type="ProteomicsDB" id="289663"/>
<dbReference type="Antibodypedia" id="35196">
    <property type="antibodies" value="186 antibodies from 30 providers"/>
</dbReference>
<dbReference type="DNASU" id="67220"/>
<dbReference type="Ensembl" id="ENSMUST00000015889.10">
    <property type="protein sequence ID" value="ENSMUSP00000015889.4"/>
    <property type="gene ID" value="ENSMUSG00000015745.10"/>
</dbReference>
<dbReference type="GeneID" id="67220"/>
<dbReference type="KEGG" id="mmu:67220"/>
<dbReference type="UCSC" id="uc008qlx.2">
    <property type="organism name" value="mouse"/>
</dbReference>
<dbReference type="AGR" id="MGI:1914470"/>
<dbReference type="CTD" id="51177"/>
<dbReference type="MGI" id="MGI:1914470">
    <property type="gene designation" value="Plekho1"/>
</dbReference>
<dbReference type="VEuPathDB" id="HostDB:ENSMUSG00000015745"/>
<dbReference type="eggNOG" id="ENOG502QSPU">
    <property type="taxonomic scope" value="Eukaryota"/>
</dbReference>
<dbReference type="GeneTree" id="ENSGT00530000063760"/>
<dbReference type="HOGENOM" id="CLU_052292_0_0_1"/>
<dbReference type="InParanoid" id="Q9JIY0"/>
<dbReference type="OMA" id="VQPEKVG"/>
<dbReference type="OrthoDB" id="6358316at2759"/>
<dbReference type="PhylomeDB" id="Q9JIY0"/>
<dbReference type="TreeFam" id="TF333115"/>
<dbReference type="BioGRID-ORCS" id="67220">
    <property type="hits" value="2 hits in 76 CRISPR screens"/>
</dbReference>
<dbReference type="ChiTaRS" id="Plekho1">
    <property type="organism name" value="mouse"/>
</dbReference>
<dbReference type="PRO" id="PR:Q9JIY0"/>
<dbReference type="Proteomes" id="UP000000589">
    <property type="component" value="Chromosome 3"/>
</dbReference>
<dbReference type="RNAct" id="Q9JIY0">
    <property type="molecule type" value="protein"/>
</dbReference>
<dbReference type="Bgee" id="ENSMUSG00000015745">
    <property type="expression patterns" value="Expressed in undifferentiated genital tubercle and 228 other cell types or tissues"/>
</dbReference>
<dbReference type="ExpressionAtlas" id="Q9JIY0">
    <property type="expression patterns" value="baseline and differential"/>
</dbReference>
<dbReference type="GO" id="GO:0005737">
    <property type="term" value="C:cytoplasm"/>
    <property type="evidence" value="ECO:0007669"/>
    <property type="project" value="UniProtKB-SubCell"/>
</dbReference>
<dbReference type="GO" id="GO:0036195">
    <property type="term" value="C:muscle cell projection membrane"/>
    <property type="evidence" value="ECO:0000314"/>
    <property type="project" value="MGI"/>
</dbReference>
<dbReference type="GO" id="GO:0005634">
    <property type="term" value="C:nucleus"/>
    <property type="evidence" value="ECO:0007669"/>
    <property type="project" value="UniProtKB-SubCell"/>
</dbReference>
<dbReference type="GO" id="GO:0032587">
    <property type="term" value="C:ruffle membrane"/>
    <property type="evidence" value="ECO:0000314"/>
    <property type="project" value="MGI"/>
</dbReference>
<dbReference type="GO" id="GO:0072673">
    <property type="term" value="P:lamellipodium morphogenesis"/>
    <property type="evidence" value="ECO:0000314"/>
    <property type="project" value="MGI"/>
</dbReference>
<dbReference type="GO" id="GO:0007520">
    <property type="term" value="P:myoblast fusion"/>
    <property type="evidence" value="ECO:0000314"/>
    <property type="project" value="MGI"/>
</dbReference>
<dbReference type="GO" id="GO:0051451">
    <property type="term" value="P:myoblast migration"/>
    <property type="evidence" value="ECO:0000315"/>
    <property type="project" value="MGI"/>
</dbReference>
<dbReference type="GO" id="GO:0008360">
    <property type="term" value="P:regulation of cell shape"/>
    <property type="evidence" value="ECO:0000314"/>
    <property type="project" value="MGI"/>
</dbReference>
<dbReference type="CDD" id="cd13317">
    <property type="entry name" value="PH_PLEKHO1_PLEKHO2"/>
    <property type="match status" value="1"/>
</dbReference>
<dbReference type="FunFam" id="2.30.29.30:FF:000237">
    <property type="entry name" value="pleckstrin homology domain-containing family O member 1"/>
    <property type="match status" value="1"/>
</dbReference>
<dbReference type="Gene3D" id="2.30.29.30">
    <property type="entry name" value="Pleckstrin-homology domain (PH domain)/Phosphotyrosine-binding domain (PTB)"/>
    <property type="match status" value="1"/>
</dbReference>
<dbReference type="InterPro" id="IPR011993">
    <property type="entry name" value="PH-like_dom_sf"/>
</dbReference>
<dbReference type="InterPro" id="IPR001849">
    <property type="entry name" value="PH_domain"/>
</dbReference>
<dbReference type="InterPro" id="IPR043448">
    <property type="entry name" value="PKHO1/2"/>
</dbReference>
<dbReference type="PANTHER" id="PTHR15871">
    <property type="entry name" value="PH DOMAIN-CONTAINING PROTEIN"/>
    <property type="match status" value="1"/>
</dbReference>
<dbReference type="PANTHER" id="PTHR15871:SF1">
    <property type="entry name" value="PLECKSTRIN HOMOLOGY DOMAIN-CONTAINING FAMILY O MEMBER 1"/>
    <property type="match status" value="1"/>
</dbReference>
<dbReference type="Pfam" id="PF00169">
    <property type="entry name" value="PH"/>
    <property type="match status" value="1"/>
</dbReference>
<dbReference type="SMART" id="SM00233">
    <property type="entry name" value="PH"/>
    <property type="match status" value="1"/>
</dbReference>
<dbReference type="SUPFAM" id="SSF50729">
    <property type="entry name" value="PH domain-like"/>
    <property type="match status" value="1"/>
</dbReference>
<dbReference type="PROSITE" id="PS50003">
    <property type="entry name" value="PH_DOMAIN"/>
    <property type="match status" value="1"/>
</dbReference>
<comment type="function">
    <text evidence="1 7">Plays a role in the regulation of the actin cytoskeleton through its interactions with actin capping protein (CP). May function to target CK2 to the plasma membrane thereby serving as an adapter to facilitate the phosphorylation of CP by protein kinase 2 (CK2). Appears to target ATM to the plasma membrane. Appears to also inhibit tumor cell growth by inhibiting AKT-mediated cell-survival. Also implicated in PI3K-regulated muscle differentiation, the regulation of AP-1 activity (plasma membrane bound AP-1 regulator that translocates to the nucleus) and the promotion of apoptosis induced by tumor necrosis factor TNF. When bound to PKB, it inhibits it probably by decreasing PKB level of phosphorylation (By similarity).</text>
</comment>
<comment type="subunit">
    <text evidence="1">Heterodimer or homodimer. Interacts with CK2 and actin capping subunits (capping protein CP-alpha and CP-beta). CKIP1 and CK2 together inhibit the activity of actin capping protein at the barbed ends of actin filaments. Interacts with ATM, IFP35, JUN, JUND, NMI and PI3K. Interacts with AKT1, AKT2 and AKT3 (each isozyme of PKB), PtdIns(3,5)P2, PtdIns(4,5)P2 and PtdIns(3,4,5)P2 (By similarity).</text>
</comment>
<comment type="subcellular location">
    <subcellularLocation>
        <location evidence="2">Cell membrane</location>
        <topology evidence="2">Peripheral membrane protein</topology>
    </subcellularLocation>
    <subcellularLocation>
        <location evidence="2">Nucleus</location>
    </subcellularLocation>
    <subcellularLocation>
        <location evidence="2">Cytoplasm</location>
    </subcellularLocation>
    <text evidence="2">Predominantly localized to the plasma membrane through the binding to phosphatidylinositol 3-phosphate. In C2C12 cells, with the absence of growth factor, it is found in the nucleus. It rapidly translocates to the plasma membrane after insulin stimulation. In response to TNF, it translocates from the plasma membrane to the cytoplasm and then to the nucleus accompanied by cleavage by caspase-3. However, the subcellular location is highly dependent of the cell type, and this explains why it is found exclusively at the plasma membrane, in some type of cells.</text>
</comment>
<comment type="PTM">
    <text evidence="1">C-terminal fragments could be released during apoptosis via caspase-3-dependent cleavage.</text>
</comment>
<feature type="chain" id="PRO_0000310424" description="Pleckstrin homology domain-containing family O member 1">
    <location>
        <begin position="1"/>
        <end position="408"/>
    </location>
</feature>
<feature type="domain" description="PH" evidence="5">
    <location>
        <begin position="20"/>
        <end position="131"/>
    </location>
</feature>
<feature type="region of interest" description="Disordered" evidence="6">
    <location>
        <begin position="1"/>
        <end position="21"/>
    </location>
</feature>
<feature type="region of interest" description="Interaction with capping proteins (CPs)" evidence="1">
    <location>
        <begin position="132"/>
        <end position="192"/>
    </location>
</feature>
<feature type="region of interest" description="Interaction with ATM, CKIP, IFP35 and NMI" evidence="1">
    <location>
        <begin position="135"/>
        <end position="307"/>
    </location>
</feature>
<feature type="region of interest" description="Disordered" evidence="6">
    <location>
        <begin position="217"/>
        <end position="264"/>
    </location>
</feature>
<feature type="region of interest" description="Negative regulator of AP-1 activity" evidence="1">
    <location>
        <begin position="307"/>
        <end position="408"/>
    </location>
</feature>
<feature type="region of interest" description="Disordered" evidence="6">
    <location>
        <begin position="325"/>
        <end position="348"/>
    </location>
</feature>
<feature type="region of interest" description="Disordered" evidence="6">
    <location>
        <begin position="389"/>
        <end position="408"/>
    </location>
</feature>
<feature type="compositionally biased region" description="Polar residues" evidence="6">
    <location>
        <begin position="229"/>
        <end position="240"/>
    </location>
</feature>
<feature type="compositionally biased region" description="Polar residues" evidence="6">
    <location>
        <begin position="389"/>
        <end position="401"/>
    </location>
</feature>
<feature type="site" description="Interacts with capping protein" evidence="1">
    <location>
        <position position="154"/>
    </location>
</feature>
<feature type="site" description="Interacts with capping protein" evidence="1">
    <location>
        <position position="156"/>
    </location>
</feature>
<feature type="site" description="Cleavage; by caspase-3" evidence="4">
    <location>
        <begin position="309"/>
        <end position="310"/>
    </location>
</feature>
<feature type="site" description="Cleavage; by caspase-3" evidence="4">
    <location>
        <begin position="344"/>
        <end position="345"/>
    </location>
</feature>
<feature type="modified residue" description="Phosphoserine" evidence="9">
    <location>
        <position position="226"/>
    </location>
</feature>
<feature type="modified residue" description="Phosphoserine" evidence="9">
    <location>
        <position position="270"/>
    </location>
</feature>
<feature type="modified residue" description="Phosphoserine" evidence="3">
    <location>
        <position position="341"/>
    </location>
</feature>
<feature type="sequence conflict" description="In Ref. 2; BAB29306." evidence="8" ref="2">
    <original>P</original>
    <variation>S</variation>
    <location>
        <position position="116"/>
    </location>
</feature>
<accession>Q9JIY0</accession>
<accession>Q9CXH2</accession>
<keyword id="KW-1003">Cell membrane</keyword>
<keyword id="KW-0963">Cytoplasm</keyword>
<keyword id="KW-0472">Membrane</keyword>
<keyword id="KW-0539">Nucleus</keyword>
<keyword id="KW-0597">Phosphoprotein</keyword>
<keyword id="KW-1185">Reference proteome</keyword>
<keyword id="KW-0043">Tumor suppressor</keyword>
<gene>
    <name type="primary">Plekho1</name>
</gene>